<reference key="1">
    <citation type="submission" date="2007-06" db="EMBL/GenBank/DDBJ databases">
        <title>Complete sequence of Clostridium beijerinckii NCIMB 8052.</title>
        <authorList>
            <consortium name="US DOE Joint Genome Institute"/>
            <person name="Copeland A."/>
            <person name="Lucas S."/>
            <person name="Lapidus A."/>
            <person name="Barry K."/>
            <person name="Detter J.C."/>
            <person name="Glavina del Rio T."/>
            <person name="Hammon N."/>
            <person name="Israni S."/>
            <person name="Dalin E."/>
            <person name="Tice H."/>
            <person name="Pitluck S."/>
            <person name="Sims D."/>
            <person name="Brettin T."/>
            <person name="Bruce D."/>
            <person name="Tapia R."/>
            <person name="Brainard J."/>
            <person name="Schmutz J."/>
            <person name="Larimer F."/>
            <person name="Land M."/>
            <person name="Hauser L."/>
            <person name="Kyrpides N."/>
            <person name="Mikhailova N."/>
            <person name="Bennet G."/>
            <person name="Cann I."/>
            <person name="Chen J.-S."/>
            <person name="Contreras A.L."/>
            <person name="Jones D."/>
            <person name="Kashket E."/>
            <person name="Mitchell W."/>
            <person name="Stoddard S."/>
            <person name="Schwarz W."/>
            <person name="Qureshi N."/>
            <person name="Young M."/>
            <person name="Shi Z."/>
            <person name="Ezeji T."/>
            <person name="White B."/>
            <person name="Blaschek H."/>
            <person name="Richardson P."/>
        </authorList>
    </citation>
    <scope>NUCLEOTIDE SEQUENCE [LARGE SCALE GENOMIC DNA]</scope>
    <source>
        <strain>ATCC 51743 / NCIMB 8052</strain>
    </source>
</reference>
<sequence length="512" mass="56436">MSKKPVMLMILDGFGIAPKSEGNAVTLAKKPNLDKLFEKYPTSQLQASGLAVGLPEGQMGNSEVGHLNIGSGRIVYQELTRITKAIADGDFFENESLKLAMTNAKKTGSSLHLMGLLSDGGVHSHIEHLRGLLEFAKKEEVQNVYVHAFMDGRDVPPSSGQEFIEKTEKMMAEVGVGKIATVSGRYYAMDRDNRWERVELAYNALVLGKGETASSATQAIEKSYHDNKTDEFVLPTVVTENGNPTANIKNGDSVIFFNFRPDRAREITRAINDKEFAGFKRETLDLTFVTMTQYDKTLERVNVAYTPQTLSNTLGEYVSNKGLNQLRIAETEKYAHVTFFFNGGVEKENPGEDRKVIPSPKVATYDLKPEMSAYEVTDELLNRLDSDKYDMVILNFANPDMVGHTGVVEAAVKAIETVDECVGKIADKILEKNGCLFITADHGNAETMIDFSTGNPYTAHTTHEVPFVWVANDTEGKKLSNGKLADIAPTMLVQLGLEVPTEMTGENLIVNK</sequence>
<name>GPMI_CLOB8</name>
<protein>
    <recommendedName>
        <fullName evidence="1">2,3-bisphosphoglycerate-independent phosphoglycerate mutase</fullName>
        <shortName evidence="1">BPG-independent PGAM</shortName>
        <shortName evidence="1">Phosphoglyceromutase</shortName>
        <shortName evidence="1">iPGM</shortName>
        <ecNumber evidence="1">5.4.2.12</ecNumber>
    </recommendedName>
</protein>
<evidence type="ECO:0000255" key="1">
    <source>
        <dbReference type="HAMAP-Rule" id="MF_01038"/>
    </source>
</evidence>
<comment type="function">
    <text evidence="1">Catalyzes the interconversion of 2-phosphoglycerate and 3-phosphoglycerate.</text>
</comment>
<comment type="catalytic activity">
    <reaction evidence="1">
        <text>(2R)-2-phosphoglycerate = (2R)-3-phosphoglycerate</text>
        <dbReference type="Rhea" id="RHEA:15901"/>
        <dbReference type="ChEBI" id="CHEBI:58272"/>
        <dbReference type="ChEBI" id="CHEBI:58289"/>
        <dbReference type="EC" id="5.4.2.12"/>
    </reaction>
</comment>
<comment type="cofactor">
    <cofactor evidence="1">
        <name>Mn(2+)</name>
        <dbReference type="ChEBI" id="CHEBI:29035"/>
    </cofactor>
    <text evidence="1">Binds 2 manganese ions per subunit.</text>
</comment>
<comment type="pathway">
    <text evidence="1">Carbohydrate degradation; glycolysis; pyruvate from D-glyceraldehyde 3-phosphate: step 3/5.</text>
</comment>
<comment type="subunit">
    <text evidence="1">Monomer.</text>
</comment>
<comment type="similarity">
    <text evidence="1">Belongs to the BPG-independent phosphoglycerate mutase family.</text>
</comment>
<feature type="chain" id="PRO_1000084298" description="2,3-bisphosphoglycerate-independent phosphoglycerate mutase">
    <location>
        <begin position="1"/>
        <end position="512"/>
    </location>
</feature>
<feature type="active site" description="Phosphoserine intermediate" evidence="1">
    <location>
        <position position="62"/>
    </location>
</feature>
<feature type="binding site" evidence="1">
    <location>
        <position position="12"/>
    </location>
    <ligand>
        <name>Mn(2+)</name>
        <dbReference type="ChEBI" id="CHEBI:29035"/>
        <label>2</label>
    </ligand>
</feature>
<feature type="binding site" evidence="1">
    <location>
        <position position="62"/>
    </location>
    <ligand>
        <name>Mn(2+)</name>
        <dbReference type="ChEBI" id="CHEBI:29035"/>
        <label>2</label>
    </ligand>
</feature>
<feature type="binding site" evidence="1">
    <location>
        <position position="123"/>
    </location>
    <ligand>
        <name>substrate</name>
    </ligand>
</feature>
<feature type="binding site" evidence="1">
    <location>
        <begin position="153"/>
        <end position="154"/>
    </location>
    <ligand>
        <name>substrate</name>
    </ligand>
</feature>
<feature type="binding site" evidence="1">
    <location>
        <position position="185"/>
    </location>
    <ligand>
        <name>substrate</name>
    </ligand>
</feature>
<feature type="binding site" evidence="1">
    <location>
        <position position="191"/>
    </location>
    <ligand>
        <name>substrate</name>
    </ligand>
</feature>
<feature type="binding site" evidence="1">
    <location>
        <begin position="260"/>
        <end position="263"/>
    </location>
    <ligand>
        <name>substrate</name>
    </ligand>
</feature>
<feature type="binding site" evidence="1">
    <location>
        <position position="333"/>
    </location>
    <ligand>
        <name>substrate</name>
    </ligand>
</feature>
<feature type="binding site" evidence="1">
    <location>
        <position position="400"/>
    </location>
    <ligand>
        <name>Mn(2+)</name>
        <dbReference type="ChEBI" id="CHEBI:29035"/>
        <label>1</label>
    </ligand>
</feature>
<feature type="binding site" evidence="1">
    <location>
        <position position="404"/>
    </location>
    <ligand>
        <name>Mn(2+)</name>
        <dbReference type="ChEBI" id="CHEBI:29035"/>
        <label>1</label>
    </ligand>
</feature>
<feature type="binding site" evidence="1">
    <location>
        <position position="441"/>
    </location>
    <ligand>
        <name>Mn(2+)</name>
        <dbReference type="ChEBI" id="CHEBI:29035"/>
        <label>2</label>
    </ligand>
</feature>
<feature type="binding site" evidence="1">
    <location>
        <position position="442"/>
    </location>
    <ligand>
        <name>Mn(2+)</name>
        <dbReference type="ChEBI" id="CHEBI:29035"/>
        <label>2</label>
    </ligand>
</feature>
<feature type="binding site" evidence="1">
    <location>
        <position position="460"/>
    </location>
    <ligand>
        <name>Mn(2+)</name>
        <dbReference type="ChEBI" id="CHEBI:29035"/>
        <label>1</label>
    </ligand>
</feature>
<keyword id="KW-0324">Glycolysis</keyword>
<keyword id="KW-0413">Isomerase</keyword>
<keyword id="KW-0464">Manganese</keyword>
<keyword id="KW-0479">Metal-binding</keyword>
<dbReference type="EC" id="5.4.2.12" evidence="1"/>
<dbReference type="EMBL" id="CP000721">
    <property type="protein sequence ID" value="ABR32787.1"/>
    <property type="molecule type" value="Genomic_DNA"/>
</dbReference>
<dbReference type="RefSeq" id="WP_011967948.1">
    <property type="nucleotide sequence ID" value="NC_009617.1"/>
</dbReference>
<dbReference type="SMR" id="A6LR07"/>
<dbReference type="KEGG" id="cbe:Cbei_0600"/>
<dbReference type="eggNOG" id="COG0696">
    <property type="taxonomic scope" value="Bacteria"/>
</dbReference>
<dbReference type="HOGENOM" id="CLU_026099_2_0_9"/>
<dbReference type="UniPathway" id="UPA00109">
    <property type="reaction ID" value="UER00186"/>
</dbReference>
<dbReference type="Proteomes" id="UP000000565">
    <property type="component" value="Chromosome"/>
</dbReference>
<dbReference type="GO" id="GO:0005829">
    <property type="term" value="C:cytosol"/>
    <property type="evidence" value="ECO:0007669"/>
    <property type="project" value="TreeGrafter"/>
</dbReference>
<dbReference type="GO" id="GO:0030145">
    <property type="term" value="F:manganese ion binding"/>
    <property type="evidence" value="ECO:0007669"/>
    <property type="project" value="UniProtKB-UniRule"/>
</dbReference>
<dbReference type="GO" id="GO:0004619">
    <property type="term" value="F:phosphoglycerate mutase activity"/>
    <property type="evidence" value="ECO:0007669"/>
    <property type="project" value="UniProtKB-EC"/>
</dbReference>
<dbReference type="GO" id="GO:0006007">
    <property type="term" value="P:glucose catabolic process"/>
    <property type="evidence" value="ECO:0007669"/>
    <property type="project" value="InterPro"/>
</dbReference>
<dbReference type="GO" id="GO:0006096">
    <property type="term" value="P:glycolytic process"/>
    <property type="evidence" value="ECO:0007669"/>
    <property type="project" value="UniProtKB-UniRule"/>
</dbReference>
<dbReference type="CDD" id="cd16010">
    <property type="entry name" value="iPGM"/>
    <property type="match status" value="1"/>
</dbReference>
<dbReference type="FunFam" id="3.40.1450.10:FF:000001">
    <property type="entry name" value="2,3-bisphosphoglycerate-independent phosphoglycerate mutase"/>
    <property type="match status" value="1"/>
</dbReference>
<dbReference type="FunFam" id="3.40.720.10:FF:000001">
    <property type="entry name" value="2,3-bisphosphoglycerate-independent phosphoglycerate mutase"/>
    <property type="match status" value="1"/>
</dbReference>
<dbReference type="Gene3D" id="3.40.720.10">
    <property type="entry name" value="Alkaline Phosphatase, subunit A"/>
    <property type="match status" value="1"/>
</dbReference>
<dbReference type="Gene3D" id="3.40.1450.10">
    <property type="entry name" value="BPG-independent phosphoglycerate mutase, domain B"/>
    <property type="match status" value="1"/>
</dbReference>
<dbReference type="HAMAP" id="MF_01038">
    <property type="entry name" value="GpmI"/>
    <property type="match status" value="1"/>
</dbReference>
<dbReference type="InterPro" id="IPR017850">
    <property type="entry name" value="Alkaline_phosphatase_core_sf"/>
</dbReference>
<dbReference type="InterPro" id="IPR011258">
    <property type="entry name" value="BPG-indep_PGM_N"/>
</dbReference>
<dbReference type="InterPro" id="IPR006124">
    <property type="entry name" value="Metalloenzyme"/>
</dbReference>
<dbReference type="InterPro" id="IPR036646">
    <property type="entry name" value="PGAM_B_sf"/>
</dbReference>
<dbReference type="InterPro" id="IPR005995">
    <property type="entry name" value="Pgm_bpd_ind"/>
</dbReference>
<dbReference type="NCBIfam" id="TIGR01307">
    <property type="entry name" value="pgm_bpd_ind"/>
    <property type="match status" value="1"/>
</dbReference>
<dbReference type="PANTHER" id="PTHR31637">
    <property type="entry name" value="2,3-BISPHOSPHOGLYCERATE-INDEPENDENT PHOSPHOGLYCERATE MUTASE"/>
    <property type="match status" value="1"/>
</dbReference>
<dbReference type="PANTHER" id="PTHR31637:SF0">
    <property type="entry name" value="2,3-BISPHOSPHOGLYCERATE-INDEPENDENT PHOSPHOGLYCERATE MUTASE"/>
    <property type="match status" value="1"/>
</dbReference>
<dbReference type="Pfam" id="PF06415">
    <property type="entry name" value="iPGM_N"/>
    <property type="match status" value="1"/>
</dbReference>
<dbReference type="Pfam" id="PF01676">
    <property type="entry name" value="Metalloenzyme"/>
    <property type="match status" value="1"/>
</dbReference>
<dbReference type="PIRSF" id="PIRSF001492">
    <property type="entry name" value="IPGAM"/>
    <property type="match status" value="1"/>
</dbReference>
<dbReference type="SUPFAM" id="SSF64158">
    <property type="entry name" value="2,3-Bisphosphoglycerate-independent phosphoglycerate mutase, substrate-binding domain"/>
    <property type="match status" value="1"/>
</dbReference>
<dbReference type="SUPFAM" id="SSF53649">
    <property type="entry name" value="Alkaline phosphatase-like"/>
    <property type="match status" value="1"/>
</dbReference>
<accession>A6LR07</accession>
<organism>
    <name type="scientific">Clostridium beijerinckii (strain ATCC 51743 / NCIMB 8052)</name>
    <name type="common">Clostridium acetobutylicum</name>
    <dbReference type="NCBI Taxonomy" id="290402"/>
    <lineage>
        <taxon>Bacteria</taxon>
        <taxon>Bacillati</taxon>
        <taxon>Bacillota</taxon>
        <taxon>Clostridia</taxon>
        <taxon>Eubacteriales</taxon>
        <taxon>Clostridiaceae</taxon>
        <taxon>Clostridium</taxon>
    </lineage>
</organism>
<proteinExistence type="inferred from homology"/>
<gene>
    <name evidence="1" type="primary">gpmI</name>
    <name type="ordered locus">Cbei_0600</name>
</gene>